<name>K0754_HUMAN</name>
<gene>
    <name evidence="5" type="primary">MACF1</name>
    <name type="synonym">KIAA0754</name>
</gene>
<comment type="subcellular location">
    <subcellularLocation>
        <location evidence="2">Cytoplasm</location>
        <location evidence="2">Cytoskeleton</location>
    </subcellularLocation>
</comment>
<comment type="alternative products">
    <event type="alternative splicing"/>
    <isoform>
        <id>O94854-3</id>
        <name>6</name>
        <sequence type="displayed"/>
    </isoform>
    <isoform>
        <id>O94854-4</id>
        <name>7</name>
        <sequence type="described" ref="VSP_061506 VSP_061507"/>
    </isoform>
    <isoform>
        <id>Q9UPN3-1</id>
        <name>1</name>
        <name>Macf1b</name>
        <sequence type="external"/>
    </isoform>
    <isoform>
        <id>Q9UPN3-2</id>
        <name>2</name>
        <name>Macf1a</name>
        <sequence type="external"/>
    </isoform>
    <isoform>
        <id>Q9UPN3-3</id>
        <name>3</name>
        <sequence type="external"/>
    </isoform>
    <isoform>
        <id>Q9UPN3-4</id>
        <name>5</name>
        <sequence type="external"/>
    </isoform>
    <isoform>
        <id>Q9UPN3-5</id>
        <name>4</name>
        <sequence type="external"/>
    </isoform>
</comment>
<comment type="sequence caution" evidence="4">
    <conflict type="erroneous initiation">
        <sequence resource="EMBL-CDS" id="BAC87042"/>
    </conflict>
    <text>Truncated N-terminus.</text>
</comment>
<comment type="sequence caution" evidence="4">
    <conflict type="frameshift">
        <sequence resource="EMBL-CDS" id="BAC87042"/>
    </conflict>
</comment>
<comment type="sequence caution" evidence="4">
    <conflict type="miscellaneous discrepancy">
        <sequence resource="EMBL-CDS" id="BAC87042"/>
    </conflict>
    <text>Contaminating sequence. Sequence of unknown origin in the C-terminal part.</text>
</comment>
<reference key="1">
    <citation type="journal article" date="2006" name="Nature">
        <title>The DNA sequence and biological annotation of human chromosome 1.</title>
        <authorList>
            <person name="Gregory S.G."/>
            <person name="Barlow K.F."/>
            <person name="McLay K.E."/>
            <person name="Kaul R."/>
            <person name="Swarbreck D."/>
            <person name="Dunham A."/>
            <person name="Scott C.E."/>
            <person name="Howe K.L."/>
            <person name="Woodfine K."/>
            <person name="Spencer C.C.A."/>
            <person name="Jones M.C."/>
            <person name="Gillson C."/>
            <person name="Searle S."/>
            <person name="Zhou Y."/>
            <person name="Kokocinski F."/>
            <person name="McDonald L."/>
            <person name="Evans R."/>
            <person name="Phillips K."/>
            <person name="Atkinson A."/>
            <person name="Cooper R."/>
            <person name="Jones C."/>
            <person name="Hall R.E."/>
            <person name="Andrews T.D."/>
            <person name="Lloyd C."/>
            <person name="Ainscough R."/>
            <person name="Almeida J.P."/>
            <person name="Ambrose K.D."/>
            <person name="Anderson F."/>
            <person name="Andrew R.W."/>
            <person name="Ashwell R.I.S."/>
            <person name="Aubin K."/>
            <person name="Babbage A.K."/>
            <person name="Bagguley C.L."/>
            <person name="Bailey J."/>
            <person name="Beasley H."/>
            <person name="Bethel G."/>
            <person name="Bird C.P."/>
            <person name="Bray-Allen S."/>
            <person name="Brown J.Y."/>
            <person name="Brown A.J."/>
            <person name="Buckley D."/>
            <person name="Burton J."/>
            <person name="Bye J."/>
            <person name="Carder C."/>
            <person name="Chapman J.C."/>
            <person name="Clark S.Y."/>
            <person name="Clarke G."/>
            <person name="Clee C."/>
            <person name="Cobley V."/>
            <person name="Collier R.E."/>
            <person name="Corby N."/>
            <person name="Coville G.J."/>
            <person name="Davies J."/>
            <person name="Deadman R."/>
            <person name="Dunn M."/>
            <person name="Earthrowl M."/>
            <person name="Ellington A.G."/>
            <person name="Errington H."/>
            <person name="Frankish A."/>
            <person name="Frankland J."/>
            <person name="French L."/>
            <person name="Garner P."/>
            <person name="Garnett J."/>
            <person name="Gay L."/>
            <person name="Ghori M.R.J."/>
            <person name="Gibson R."/>
            <person name="Gilby L.M."/>
            <person name="Gillett W."/>
            <person name="Glithero R.J."/>
            <person name="Grafham D.V."/>
            <person name="Griffiths C."/>
            <person name="Griffiths-Jones S."/>
            <person name="Grocock R."/>
            <person name="Hammond S."/>
            <person name="Harrison E.S.I."/>
            <person name="Hart E."/>
            <person name="Haugen E."/>
            <person name="Heath P.D."/>
            <person name="Holmes S."/>
            <person name="Holt K."/>
            <person name="Howden P.J."/>
            <person name="Hunt A.R."/>
            <person name="Hunt S.E."/>
            <person name="Hunter G."/>
            <person name="Isherwood J."/>
            <person name="James R."/>
            <person name="Johnson C."/>
            <person name="Johnson D."/>
            <person name="Joy A."/>
            <person name="Kay M."/>
            <person name="Kershaw J.K."/>
            <person name="Kibukawa M."/>
            <person name="Kimberley A.M."/>
            <person name="King A."/>
            <person name="Knights A.J."/>
            <person name="Lad H."/>
            <person name="Laird G."/>
            <person name="Lawlor S."/>
            <person name="Leongamornlert D.A."/>
            <person name="Lloyd D.M."/>
            <person name="Loveland J."/>
            <person name="Lovell J."/>
            <person name="Lush M.J."/>
            <person name="Lyne R."/>
            <person name="Martin S."/>
            <person name="Mashreghi-Mohammadi M."/>
            <person name="Matthews L."/>
            <person name="Matthews N.S.W."/>
            <person name="McLaren S."/>
            <person name="Milne S."/>
            <person name="Mistry S."/>
            <person name="Moore M.J.F."/>
            <person name="Nickerson T."/>
            <person name="O'Dell C.N."/>
            <person name="Oliver K."/>
            <person name="Palmeiri A."/>
            <person name="Palmer S.A."/>
            <person name="Parker A."/>
            <person name="Patel D."/>
            <person name="Pearce A.V."/>
            <person name="Peck A.I."/>
            <person name="Pelan S."/>
            <person name="Phelps K."/>
            <person name="Phillimore B.J."/>
            <person name="Plumb R."/>
            <person name="Rajan J."/>
            <person name="Raymond C."/>
            <person name="Rouse G."/>
            <person name="Saenphimmachak C."/>
            <person name="Sehra H.K."/>
            <person name="Sheridan E."/>
            <person name="Shownkeen R."/>
            <person name="Sims S."/>
            <person name="Skuce C.D."/>
            <person name="Smith M."/>
            <person name="Steward C."/>
            <person name="Subramanian S."/>
            <person name="Sycamore N."/>
            <person name="Tracey A."/>
            <person name="Tromans A."/>
            <person name="Van Helmond Z."/>
            <person name="Wall M."/>
            <person name="Wallis J.M."/>
            <person name="White S."/>
            <person name="Whitehead S.L."/>
            <person name="Wilkinson J.E."/>
            <person name="Willey D.L."/>
            <person name="Williams H."/>
            <person name="Wilming L."/>
            <person name="Wray P.W."/>
            <person name="Wu Z."/>
            <person name="Coulson A."/>
            <person name="Vaudin M."/>
            <person name="Sulston J.E."/>
            <person name="Durbin R.M."/>
            <person name="Hubbard T."/>
            <person name="Wooster R."/>
            <person name="Dunham I."/>
            <person name="Carter N.P."/>
            <person name="McVean G."/>
            <person name="Ross M.T."/>
            <person name="Harrow J."/>
            <person name="Olson M.V."/>
            <person name="Beck S."/>
            <person name="Rogers J."/>
            <person name="Bentley D.R."/>
        </authorList>
    </citation>
    <scope>NUCLEOTIDE SEQUENCE [LARGE SCALE GENOMIC DNA]</scope>
</reference>
<reference key="2">
    <citation type="journal article" date="2004" name="Nat. Genet.">
        <title>Complete sequencing and characterization of 21,243 full-length human cDNAs.</title>
        <authorList>
            <person name="Ota T."/>
            <person name="Suzuki Y."/>
            <person name="Nishikawa T."/>
            <person name="Otsuki T."/>
            <person name="Sugiyama T."/>
            <person name="Irie R."/>
            <person name="Wakamatsu A."/>
            <person name="Hayashi K."/>
            <person name="Sato H."/>
            <person name="Nagai K."/>
            <person name="Kimura K."/>
            <person name="Makita H."/>
            <person name="Sekine M."/>
            <person name="Obayashi M."/>
            <person name="Nishi T."/>
            <person name="Shibahara T."/>
            <person name="Tanaka T."/>
            <person name="Ishii S."/>
            <person name="Yamamoto J."/>
            <person name="Saito K."/>
            <person name="Kawai Y."/>
            <person name="Isono Y."/>
            <person name="Nakamura Y."/>
            <person name="Nagahari K."/>
            <person name="Murakami K."/>
            <person name="Yasuda T."/>
            <person name="Iwayanagi T."/>
            <person name="Wagatsuma M."/>
            <person name="Shiratori A."/>
            <person name="Sudo H."/>
            <person name="Hosoiri T."/>
            <person name="Kaku Y."/>
            <person name="Kodaira H."/>
            <person name="Kondo H."/>
            <person name="Sugawara M."/>
            <person name="Takahashi M."/>
            <person name="Kanda K."/>
            <person name="Yokoi T."/>
            <person name="Furuya T."/>
            <person name="Kikkawa E."/>
            <person name="Omura Y."/>
            <person name="Abe K."/>
            <person name="Kamihara K."/>
            <person name="Katsuta N."/>
            <person name="Sato K."/>
            <person name="Tanikawa M."/>
            <person name="Yamazaki M."/>
            <person name="Ninomiya K."/>
            <person name="Ishibashi T."/>
            <person name="Yamashita H."/>
            <person name="Murakawa K."/>
            <person name="Fujimori K."/>
            <person name="Tanai H."/>
            <person name="Kimata M."/>
            <person name="Watanabe M."/>
            <person name="Hiraoka S."/>
            <person name="Chiba Y."/>
            <person name="Ishida S."/>
            <person name="Ono Y."/>
            <person name="Takiguchi S."/>
            <person name="Watanabe S."/>
            <person name="Yosida M."/>
            <person name="Hotuta T."/>
            <person name="Kusano J."/>
            <person name="Kanehori K."/>
            <person name="Takahashi-Fujii A."/>
            <person name="Hara H."/>
            <person name="Tanase T.-O."/>
            <person name="Nomura Y."/>
            <person name="Togiya S."/>
            <person name="Komai F."/>
            <person name="Hara R."/>
            <person name="Takeuchi K."/>
            <person name="Arita M."/>
            <person name="Imose N."/>
            <person name="Musashino K."/>
            <person name="Yuuki H."/>
            <person name="Oshima A."/>
            <person name="Sasaki N."/>
            <person name="Aotsuka S."/>
            <person name="Yoshikawa Y."/>
            <person name="Matsunawa H."/>
            <person name="Ichihara T."/>
            <person name="Shiohata N."/>
            <person name="Sano S."/>
            <person name="Moriya S."/>
            <person name="Momiyama H."/>
            <person name="Satoh N."/>
            <person name="Takami S."/>
            <person name="Terashima Y."/>
            <person name="Suzuki O."/>
            <person name="Nakagawa S."/>
            <person name="Senoh A."/>
            <person name="Mizoguchi H."/>
            <person name="Goto Y."/>
            <person name="Shimizu F."/>
            <person name="Wakebe H."/>
            <person name="Hishigaki H."/>
            <person name="Watanabe T."/>
            <person name="Sugiyama A."/>
            <person name="Takemoto M."/>
            <person name="Kawakami B."/>
            <person name="Yamazaki M."/>
            <person name="Watanabe K."/>
            <person name="Kumagai A."/>
            <person name="Itakura S."/>
            <person name="Fukuzumi Y."/>
            <person name="Fujimori Y."/>
            <person name="Komiyama M."/>
            <person name="Tashiro H."/>
            <person name="Tanigami A."/>
            <person name="Fujiwara T."/>
            <person name="Ono T."/>
            <person name="Yamada K."/>
            <person name="Fujii Y."/>
            <person name="Ozaki K."/>
            <person name="Hirao M."/>
            <person name="Ohmori Y."/>
            <person name="Kawabata A."/>
            <person name="Hikiji T."/>
            <person name="Kobatake N."/>
            <person name="Inagaki H."/>
            <person name="Ikema Y."/>
            <person name="Okamoto S."/>
            <person name="Okitani R."/>
            <person name="Kawakami T."/>
            <person name="Noguchi S."/>
            <person name="Itoh T."/>
            <person name="Shigeta K."/>
            <person name="Senba T."/>
            <person name="Matsumura K."/>
            <person name="Nakajima Y."/>
            <person name="Mizuno T."/>
            <person name="Morinaga M."/>
            <person name="Sasaki M."/>
            <person name="Togashi T."/>
            <person name="Oyama M."/>
            <person name="Hata H."/>
            <person name="Watanabe M."/>
            <person name="Komatsu T."/>
            <person name="Mizushima-Sugano J."/>
            <person name="Satoh T."/>
            <person name="Shirai Y."/>
            <person name="Takahashi Y."/>
            <person name="Nakagawa K."/>
            <person name="Okumura K."/>
            <person name="Nagase T."/>
            <person name="Nomura N."/>
            <person name="Kikuchi H."/>
            <person name="Masuho Y."/>
            <person name="Yamashita R."/>
            <person name="Nakai K."/>
            <person name="Yada T."/>
            <person name="Nakamura Y."/>
            <person name="Ohara O."/>
            <person name="Isogai T."/>
            <person name="Sugano S."/>
        </authorList>
    </citation>
    <scope>NUCLEOTIDE SEQUENCE [LARGE SCALE MRNA] OF 72-1104</scope>
</reference>
<reference key="3">
    <citation type="journal article" date="1998" name="DNA Res.">
        <title>Prediction of the coding sequences of unidentified human genes. XI. The complete sequences of 100 new cDNA clones from brain which code for large proteins in vitro.</title>
        <authorList>
            <person name="Nagase T."/>
            <person name="Ishikawa K."/>
            <person name="Suyama M."/>
            <person name="Kikuno R."/>
            <person name="Miyajima N."/>
            <person name="Tanaka A."/>
            <person name="Kotani H."/>
            <person name="Nomura N."/>
            <person name="Ohara O."/>
        </authorList>
    </citation>
    <scope>NUCLEOTIDE SEQUENCE [LARGE SCALE MRNA] OF 254-3515 (ISOFORM 7)</scope>
    <source>
        <tissue>Brain</tissue>
    </source>
</reference>
<reference key="4">
    <citation type="journal article" date="2002" name="DNA Res.">
        <title>Construction of expression-ready cDNA clones for KIAA genes: manual curation of 330 KIAA cDNA clones.</title>
        <authorList>
            <person name="Nakajima D."/>
            <person name="Okazaki N."/>
            <person name="Yamakawa H."/>
            <person name="Kikuno R."/>
            <person name="Ohara O."/>
            <person name="Nagase T."/>
        </authorList>
    </citation>
    <scope>SEQUENCE REVISION</scope>
</reference>
<dbReference type="EMBL" id="AL137853">
    <property type="status" value="NOT_ANNOTATED_CDS"/>
    <property type="molecule type" value="Genomic_DNA"/>
</dbReference>
<dbReference type="EMBL" id="AK127581">
    <property type="protein sequence ID" value="BAC87042.1"/>
    <property type="status" value="ALT_SEQ"/>
    <property type="molecule type" value="mRNA"/>
</dbReference>
<dbReference type="EMBL" id="AB018297">
    <property type="protein sequence ID" value="BAA34474.2"/>
    <property type="molecule type" value="mRNA"/>
</dbReference>
<dbReference type="RefSeq" id="NP_001384402.1">
    <molecule id="O94854-3"/>
    <property type="nucleotide sequence ID" value="NM_001397473.1"/>
</dbReference>
<dbReference type="RefSeq" id="NP_055853.1">
    <property type="nucleotide sequence ID" value="NM_015038.1"/>
</dbReference>
<dbReference type="SMR" id="O94854"/>
<dbReference type="BioGRID" id="568672">
    <property type="interactions" value="40"/>
</dbReference>
<dbReference type="IntAct" id="O94854">
    <property type="interactions" value="29"/>
</dbReference>
<dbReference type="MINT" id="O94854"/>
<dbReference type="iPTMnet" id="O94854"/>
<dbReference type="PhosphoSitePlus" id="O94854"/>
<dbReference type="SwissPalm" id="O94854"/>
<dbReference type="BioMuta" id="HGNC:29111"/>
<dbReference type="jPOST" id="O94854"/>
<dbReference type="MassIVE" id="O94854"/>
<dbReference type="PeptideAtlas" id="O94854"/>
<dbReference type="ProteomicsDB" id="22069"/>
<dbReference type="Pumba" id="O94854"/>
<dbReference type="GeneID" id="23499"/>
<dbReference type="AGR" id="HGNC:13664"/>
<dbReference type="DisGeNET" id="23499"/>
<dbReference type="GeneCards" id="MACF1"/>
<dbReference type="HGNC" id="HGNC:13664">
    <property type="gene designation" value="MACF1"/>
</dbReference>
<dbReference type="MalaCards" id="MACF1"/>
<dbReference type="neXtProt" id="NX_O94854"/>
<dbReference type="PharmGKB" id="PA128394598"/>
<dbReference type="InParanoid" id="O94854"/>
<dbReference type="OrthoDB" id="9478980at2759"/>
<dbReference type="PAN-GO" id="O94854">
    <property type="GO annotations" value="0 GO annotations based on evolutionary models"/>
</dbReference>
<dbReference type="PhylomeDB" id="O94854"/>
<dbReference type="PathwayCommons" id="O94854"/>
<dbReference type="SignaLink" id="O94854"/>
<dbReference type="BioGRID-ORCS" id="643314">
    <property type="hits" value="10 hits in 300 CRISPR screens"/>
</dbReference>
<dbReference type="GenomeRNAi" id="643314"/>
<dbReference type="Pharos" id="O94854">
    <property type="development level" value="Tdark"/>
</dbReference>
<dbReference type="Proteomes" id="UP000005640">
    <property type="component" value="Unplaced"/>
</dbReference>
<dbReference type="RNAct" id="O94854">
    <property type="molecule type" value="protein"/>
</dbReference>
<dbReference type="GO" id="GO:0005737">
    <property type="term" value="C:cytoplasm"/>
    <property type="evidence" value="ECO:0007669"/>
    <property type="project" value="UniProtKB-KW"/>
</dbReference>
<dbReference type="GO" id="GO:0005856">
    <property type="term" value="C:cytoskeleton"/>
    <property type="evidence" value="ECO:0007669"/>
    <property type="project" value="UniProtKB-SubCell"/>
</dbReference>
<dbReference type="GO" id="GO:0005509">
    <property type="term" value="F:calcium ion binding"/>
    <property type="evidence" value="ECO:0007669"/>
    <property type="project" value="InterPro"/>
</dbReference>
<dbReference type="GO" id="GO:0008017">
    <property type="term" value="F:microtubule binding"/>
    <property type="evidence" value="ECO:0007669"/>
    <property type="project" value="InterPro"/>
</dbReference>
<dbReference type="CDD" id="cd00051">
    <property type="entry name" value="EFh"/>
    <property type="match status" value="1"/>
</dbReference>
<dbReference type="CDD" id="cd00176">
    <property type="entry name" value="SPEC"/>
    <property type="match status" value="8"/>
</dbReference>
<dbReference type="FunFam" id="1.10.238.10:FF:000013">
    <property type="entry name" value="Microtubule-actin cross-linking factor 1"/>
    <property type="match status" value="1"/>
</dbReference>
<dbReference type="FunFam" id="1.20.58.60:FF:000001">
    <property type="entry name" value="Microtubule-actin cross-linking factor 1"/>
    <property type="match status" value="3"/>
</dbReference>
<dbReference type="FunFam" id="1.20.58.60:FF:000012">
    <property type="entry name" value="Microtubule-actin cross-linking factor 1"/>
    <property type="match status" value="1"/>
</dbReference>
<dbReference type="FunFam" id="1.20.58.60:FF:000016">
    <property type="entry name" value="Microtubule-actin cross-linking factor 1"/>
    <property type="match status" value="1"/>
</dbReference>
<dbReference type="FunFam" id="1.20.58.60:FF:000021">
    <property type="entry name" value="Microtubule-actin cross-linking factor 1"/>
    <property type="match status" value="1"/>
</dbReference>
<dbReference type="FunFam" id="1.20.58.60:FF:000022">
    <property type="entry name" value="Microtubule-actin cross-linking factor 1"/>
    <property type="match status" value="1"/>
</dbReference>
<dbReference type="FunFam" id="3.30.920.20:FF:000001">
    <property type="entry name" value="Microtubule-actin cross-linking factor 1"/>
    <property type="match status" value="1"/>
</dbReference>
<dbReference type="FunFam" id="1.20.58.60:FF:000008">
    <property type="entry name" value="microtubule-actin cross-linking factor 1"/>
    <property type="match status" value="1"/>
</dbReference>
<dbReference type="FunFam" id="1.20.58.60:FF:000014">
    <property type="entry name" value="microtubule-actin cross-linking factor 1"/>
    <property type="match status" value="1"/>
</dbReference>
<dbReference type="FunFam" id="1.20.58.60:FF:000025">
    <property type="entry name" value="microtubule-actin cross-linking factor 1"/>
    <property type="match status" value="1"/>
</dbReference>
<dbReference type="FunFam" id="1.20.58.60:FF:000084">
    <property type="entry name" value="microtubule-actin cross-linking factor 1 isoform X2"/>
    <property type="match status" value="1"/>
</dbReference>
<dbReference type="FunFam" id="1.20.58.60:FF:000088">
    <property type="entry name" value="microtubule-actin cross-linking factor 1 isoform X2"/>
    <property type="match status" value="1"/>
</dbReference>
<dbReference type="FunFam" id="1.20.58.60:FF:000092">
    <property type="entry name" value="microtubule-actin cross-linking factor 1 isoform X2"/>
    <property type="match status" value="1"/>
</dbReference>
<dbReference type="FunFam" id="1.20.58.60:FF:000048">
    <property type="entry name" value="microtubule-actin cross-linking factor 1 isoform X3"/>
    <property type="match status" value="1"/>
</dbReference>
<dbReference type="FunFam" id="1.20.58.60:FF:000061">
    <property type="entry name" value="microtubule-actin cross-linking factor 1 isoform X3"/>
    <property type="match status" value="1"/>
</dbReference>
<dbReference type="Gene3D" id="1.20.58.60">
    <property type="match status" value="16"/>
</dbReference>
<dbReference type="Gene3D" id="1.10.238.10">
    <property type="entry name" value="EF-hand"/>
    <property type="match status" value="1"/>
</dbReference>
<dbReference type="Gene3D" id="3.30.920.20">
    <property type="entry name" value="Gas2-like domain"/>
    <property type="match status" value="1"/>
</dbReference>
<dbReference type="InterPro" id="IPR011992">
    <property type="entry name" value="EF-hand-dom_pair"/>
</dbReference>
<dbReference type="InterPro" id="IPR018247">
    <property type="entry name" value="EF_Hand_1_Ca_BS"/>
</dbReference>
<dbReference type="InterPro" id="IPR002048">
    <property type="entry name" value="EF_hand_dom"/>
</dbReference>
<dbReference type="InterPro" id="IPR003108">
    <property type="entry name" value="GAR_dom"/>
</dbReference>
<dbReference type="InterPro" id="IPR036534">
    <property type="entry name" value="GAR_dom_sf"/>
</dbReference>
<dbReference type="InterPro" id="IPR037727">
    <property type="entry name" value="MCAF1-like"/>
</dbReference>
<dbReference type="InterPro" id="IPR018159">
    <property type="entry name" value="Spectrin/alpha-actinin"/>
</dbReference>
<dbReference type="InterPro" id="IPR002017">
    <property type="entry name" value="Spectrin_repeat"/>
</dbReference>
<dbReference type="PANTHER" id="PTHR35248:SF2">
    <property type="entry name" value="3-HYDROXYACYL-COA DEHYDROGENASE C-TERMINAL DOMAIN-CONTAINING PROTEIN"/>
    <property type="match status" value="1"/>
</dbReference>
<dbReference type="PANTHER" id="PTHR35248">
    <property type="entry name" value="PUTATIVE-RELATED"/>
    <property type="match status" value="1"/>
</dbReference>
<dbReference type="Pfam" id="PF13499">
    <property type="entry name" value="EF-hand_7"/>
    <property type="match status" value="1"/>
</dbReference>
<dbReference type="Pfam" id="PF02187">
    <property type="entry name" value="GAS2"/>
    <property type="match status" value="1"/>
</dbReference>
<dbReference type="Pfam" id="PF00435">
    <property type="entry name" value="Spectrin"/>
    <property type="match status" value="11"/>
</dbReference>
<dbReference type="SMART" id="SM00054">
    <property type="entry name" value="EFh"/>
    <property type="match status" value="2"/>
</dbReference>
<dbReference type="SMART" id="SM00243">
    <property type="entry name" value="GAS2"/>
    <property type="match status" value="1"/>
</dbReference>
<dbReference type="SMART" id="SM00150">
    <property type="entry name" value="SPEC"/>
    <property type="match status" value="16"/>
</dbReference>
<dbReference type="SUPFAM" id="SSF47473">
    <property type="entry name" value="EF-hand"/>
    <property type="match status" value="1"/>
</dbReference>
<dbReference type="SUPFAM" id="SSF143575">
    <property type="entry name" value="GAS2 domain-like"/>
    <property type="match status" value="1"/>
</dbReference>
<dbReference type="SUPFAM" id="SSF46966">
    <property type="entry name" value="Spectrin repeat"/>
    <property type="match status" value="13"/>
</dbReference>
<dbReference type="PROSITE" id="PS00018">
    <property type="entry name" value="EF_HAND_1"/>
    <property type="match status" value="2"/>
</dbReference>
<dbReference type="PROSITE" id="PS50222">
    <property type="entry name" value="EF_HAND_2"/>
    <property type="match status" value="2"/>
</dbReference>
<dbReference type="PROSITE" id="PS51460">
    <property type="entry name" value="GAR"/>
    <property type="match status" value="1"/>
</dbReference>
<keyword id="KW-0025">Alternative splicing</keyword>
<keyword id="KW-0106">Calcium</keyword>
<keyword id="KW-0963">Cytoplasm</keyword>
<keyword id="KW-0206">Cytoskeleton</keyword>
<keyword id="KW-0479">Metal-binding</keyword>
<keyword id="KW-1267">Proteomics identification</keyword>
<keyword id="KW-1185">Reference proteome</keyword>
<keyword id="KW-0677">Repeat</keyword>
<sequence length="3515" mass="388666">MGKPLSRPDCLRRNPSCLGKGEEEDGYIEDCYVPQRSIYDTMRINEQIDQGSKLNQTSKSTMEKMEGSTISSNGTLGAASNVFESRAPEGKKLDERIIFDALKLSSDVQKSAPVPPRRRPNAERKDNVNRRSWKSFMPPNFPEFAERIEASLSEVSEAGASNPSLQEKKESSSALTESSGHLDHREPQSESVTLEHVSKSIGIPEVQDFKNLSGDCQDFRFQQHSANPPHEFQPVESEAVATSGNTDVMQESRFSSATWPRATKSLAKGGFSEKQHPLGDTACTVEMPPLSPCLSEELLDPELHVLITPSLREKTESELKFEEDERWIMMEAEGEWEEEKLSDREKTFLMADEKNSLADIFEEREQANTAVVEDGSDCLAAVLRTFGHLSLGQICCPDDPQPAKDQLATVPKDIPLDCDCVLTGEDILGEVANRTAQGLEGLVSDSACTVGTIDAEQLSDTDSVQMFLELEKECLCEEGVTPLVELQNQISSEGLAASQDAENLLVISHFSGAALEKEQHLGLLHVRAKDYDTRLDCGYFNTLDSSQVPNAVELIAHVDIMRDTSTVSKEECEKVPFSPRTAEFKSRQPADLDSLEKLDPGGLLNSDHRVSHEEKLSGFIASELAKDNGSLSQGDCSQTEGNGEECIERVTFSFAFNHELTDVTSGPEVEVLYESNLLTDEIHLESGNVTVNQENNSLTSMGNVVTCELSVEKVCDEDGEAKELDYQATLLEDQAPAHFHRNFPEQVFQDLQRKSPESEILSLHLLVEELRLNPDGVETVNDTKPELNVASSEGGEMERRDSDSFLNIFPEKQVTKAGNTEPVLEEWIPVLQRPSRTAAVPTVKDALDAALPSPEEGTSIAAVPAPEGTAVVAALVPFPHEDILVASIVSLEEEDVTAAAVSAPERATVPAVTVSVPEGTAAVAAVSSPEETAPAVAAAITQEGMSAVAGFSPEWAALAITVPITEEDGTPEGPVTPATTVHAPEEPDTAAVRVSTPEEPASPAAAVPTPEEPTSPAAAVPTPEEPTSPAAAVPPPEEPTSPAAAVPTPEEPTSPAAAVPTPEEPTSPAAAVPTPEEPTSPAAAVPTPEEPTSPAAAVPTPEEPTSPAAAVPTPEEPASPAAAVPTPEEPASPAAAVPTPEEPAFPAPAVPTPEESASAAVAVPTPEESASPAAAVPTPAESASFAAVVATLEEPTSPAASVPTPAAMVATLEEFTSPAASVPTSEEPASLAAAVSNPEEPTSPAAAVPTLEEPTSSAAAVLTPEELSSPAASVPTPEEPASPAAAVSNLEEPASPAAAVPTPEVAAIPAASVPTPEVPAIPAAAVPPMEEVSPIGVPFLGVSAHTDSVPISEEGTPVLEEASSTGMWIKEDLDSLVFGIKEVTSTVLHGKVPLAATAGLNSDEMFQKEQVDPLQMKLQQVNGLGQGLIQSAGKDCDVQGLEHDMEEINARWNTLNKKVAQRIAQLQEALLHCGKFQDALEPLLSWLADTEELIANQKPPSAEYKVVKAQIQEQKLLQRLLDDRKATVDMLQAEGGRIAQSAELADREKITGQLESLESRWTELLSKAAARQKQLEDILVLAKQFHETAEPISDFLSVTEKKLANSEPVGTQTAKIQQQIIRHKALNEEIVNRKKNVDQAIKNGQALLKQTTGEEVLLIQEKLDGIKTRYADITVTSSKALRTLEQARQLATKFQSTYEELTGWLREVEEELATSGGQSPTGEQIPQFQQRQKELKKEVMEHRLVLDTVNEVSRALLELVPWRAREGLDKLVSDANEQYKLVSDTIGQRVDEIDAAIQRSQQYEQAADAELAWVAETKRKLMALGPIRLEQDQTTAQLQVQKAFSIDIIRHKDSMDELFSHRSEIFGTCGEEQKTVLQEKTESLIQQYEAISLLNSERYARLERAQVLVNQFWETYEELSPWIEETRALIAQLPSPAIDHEQLRQQQEEMRQLRESIAEHKPHIDKLLKIGPQLKELNPEEGEMVEEKYQKAENMYAQIKEEVRQRALALDEAVSQSTQITEFHDKIEPMLETLENLSSRLRMPPLIPAEVDKIRECISDNKSATVELEKLQPSFEALKRRGEELIGRSQGADKDLAAKEIQDKLDQMVFFWEDIKARAEEREIKFLDVLELAEKFWYDMAALLTTIKDTQDIVHDLESPGIDPSIIKQQVEAAETIKEETDGLHEELEFIRILGADLIFACGETEKPEVRKSIDEMNNAWENLNKTWKERLEKLEDAMQAAVQYQDTLQAMFDWLDNTVIKLCTMPPVGTDLNTVKDQLNEMKEFKVEVYQQQIEMEKLNHQGELMLKKATDETDRDIIREPLTELKHLWENLGEKIAHRQHKLEGALLALGQFQHALEELMSWLTHTEELLDAQRPISGDPKVIEVELAKHHVLKNDVLAHQATVETVNKAGNELLESSAGDDASSLRSRLEAMNQCWESVLQKTEEREQQLQSTLQQAQGFHSEIEDFLLELTRMESQLSASKPTGGLPETAREQLDTHMELYSQLKAKEETYNQLLDKGRLMLLSRDDSGSGSKTEQSVALLEQKWHVVSSKMEERKSKLEEALNLATEFQNSLQEFINWLTLAEQSLNIASPPSLILNTVLSQIEEHKVFANEVNAHRDQIIELDQTGNQLKFLSQKQDVVLIKNLLVSVQSRWEKVVQRSIERGRSLDDARKRAKQFHEAWKKLIDWLEDAESHLDSELEISNDPDKIKLQLSKHKEFQKTLGGKQPVYDTTIRTGRALKEKTLLPEDSQKLDNFLGEVRDKWDTVCGKSVERQHKLEEALLFSGQFMDALQALVDWLYKVEPQLAEDQPVHGDLDLVMNLMDAHKVFQKELGKRTGTVQVLKRSGRELIENSRDDTTWVKGQLQELSTRWDTVCKLSVSKQSRLEQALKQAEVFRDTVHMLLEWLSEAEQTLRFRGALPDDTEALQSLIDTHKEFMKKVEEKRVDVNSAVAMGEVILAVCHPDCITTIKHWITIIRARFEEVLTWAKQHQQRLETALSELVANAELLEELLAWIQWAETTLIQRDQEPIPQNIDRVKALIAEHQTFMEEMTRKQPDVDRVTKTYKRKNIEPTHAPFIEKSRSGGRKSLSQPTPPPMPILSQSEAKNPRINQLSARWQQVWLLALERQRKLNDALDRLEELKEFANFDFDVWRKKYMRWMNHKKSRVMDFFRRIDKDQDGKITRQEFIDGILASKFPTTKLEMTAVADIFDRDGDGYIDYYEFVAALHPNKDAYRPTTDADKIEDEVTRQVAQCKCAKRFQVEQIGENKYRFGDSQQLRLVRILRSTVMVRVGGGWMALDEFLVKNDPCRARGRTNIELREKFILPEGASQGMTPFRSRGRRSKPSSRAASPTRSSSSASQSNHSCTSMPSSPATPASGTKVIPSSGSKLKRPTPTFHSSRTSLAGDTSNSSSPASTGAKTNRADPKKSASRPGSRAGSRAGSRASSRRGSDASDFDLLETQSACSDTSESSAAGGQGNSRRGLNKPSKIPTMSKKTTTASPRTPGPKR</sequence>
<accession>O94854</accession>
<accession>E9PMC2</accession>
<accession>Q6ZSB2</accession>
<evidence type="ECO:0000255" key="1">
    <source>
        <dbReference type="PROSITE-ProRule" id="PRU00448"/>
    </source>
</evidence>
<evidence type="ECO:0000255" key="2">
    <source>
        <dbReference type="PROSITE-ProRule" id="PRU00792"/>
    </source>
</evidence>
<evidence type="ECO:0000256" key="3">
    <source>
        <dbReference type="SAM" id="MobiDB-lite"/>
    </source>
</evidence>
<evidence type="ECO:0000305" key="4"/>
<evidence type="ECO:0000312" key="5">
    <source>
        <dbReference type="HGNC" id="HGNC:13664"/>
    </source>
</evidence>
<proteinExistence type="evidence at protein level"/>
<organism>
    <name type="scientific">Homo sapiens</name>
    <name type="common">Human</name>
    <dbReference type="NCBI Taxonomy" id="9606"/>
    <lineage>
        <taxon>Eukaryota</taxon>
        <taxon>Metazoa</taxon>
        <taxon>Chordata</taxon>
        <taxon>Craniata</taxon>
        <taxon>Vertebrata</taxon>
        <taxon>Euteleostomi</taxon>
        <taxon>Mammalia</taxon>
        <taxon>Eutheria</taxon>
        <taxon>Euarchontoglires</taxon>
        <taxon>Primates</taxon>
        <taxon>Haplorrhini</taxon>
        <taxon>Catarrhini</taxon>
        <taxon>Hominidae</taxon>
        <taxon>Homo</taxon>
    </lineage>
</organism>
<feature type="chain" id="PRO_0000295722" description="Microtubule-actin cross-linking factor 1, isoforms 6/7">
    <location>
        <begin position="1"/>
        <end position="3515"/>
    </location>
</feature>
<feature type="repeat" description="1">
    <location>
        <begin position="1012"/>
        <end position="1024"/>
    </location>
</feature>
<feature type="repeat" description="2">
    <location>
        <begin position="1026"/>
        <end position="1037"/>
    </location>
</feature>
<feature type="repeat" description="3">
    <location>
        <begin position="1038"/>
        <end position="1051"/>
    </location>
</feature>
<feature type="repeat" description="4">
    <location>
        <begin position="1052"/>
        <end position="1064"/>
    </location>
</feature>
<feature type="repeat" description="5">
    <location>
        <begin position="1065"/>
        <end position="1077"/>
    </location>
</feature>
<feature type="repeat" description="6">
    <location>
        <begin position="1078"/>
        <end position="1090"/>
    </location>
</feature>
<feature type="repeat" description="7">
    <location>
        <begin position="1091"/>
        <end position="1103"/>
    </location>
</feature>
<feature type="repeat" description="8">
    <location>
        <begin position="1104"/>
        <end position="1116"/>
    </location>
</feature>
<feature type="repeat" description="9">
    <location>
        <begin position="1117"/>
        <end position="1129"/>
    </location>
</feature>
<feature type="repeat" description="10">
    <location>
        <begin position="1130"/>
        <end position="1142"/>
    </location>
</feature>
<feature type="repeat" description="11">
    <location>
        <begin position="1143"/>
        <end position="1155"/>
    </location>
</feature>
<feature type="repeat" description="12">
    <location>
        <begin position="1156"/>
        <end position="1168"/>
    </location>
</feature>
<feature type="repeat" description="13">
    <location>
        <begin position="1169"/>
        <end position="1178"/>
    </location>
</feature>
<feature type="domain" description="EF-hand 1" evidence="1">
    <location>
        <begin position="3168"/>
        <end position="3203"/>
    </location>
</feature>
<feature type="domain" description="EF-hand 2" evidence="1">
    <location>
        <begin position="3204"/>
        <end position="3239"/>
    </location>
</feature>
<feature type="domain" description="GAR" evidence="2">
    <location>
        <begin position="3244"/>
        <end position="3316"/>
    </location>
</feature>
<feature type="region of interest" description="Disordered" evidence="3">
    <location>
        <begin position="1"/>
        <end position="23"/>
    </location>
</feature>
<feature type="region of interest" description="Disordered" evidence="3">
    <location>
        <begin position="108"/>
        <end position="136"/>
    </location>
</feature>
<feature type="region of interest" description="Disordered" evidence="3">
    <location>
        <begin position="155"/>
        <end position="196"/>
    </location>
</feature>
<feature type="region of interest" description="13 X 13 AA approximate tandem repeat of P-T-S-P-A-A-A-V-P-T-P-E-E">
    <location>
        <begin position="157"/>
        <end position="245"/>
    </location>
</feature>
<feature type="region of interest" description="Disordered" evidence="3">
    <location>
        <begin position="965"/>
        <end position="1178"/>
    </location>
</feature>
<feature type="region of interest" description="Disordered" evidence="3">
    <location>
        <begin position="1217"/>
        <end position="1298"/>
    </location>
</feature>
<feature type="region of interest" description="Disordered" evidence="3">
    <location>
        <begin position="1710"/>
        <end position="1730"/>
    </location>
</feature>
<feature type="region of interest" description="Disordered" evidence="3">
    <location>
        <begin position="3078"/>
        <end position="3108"/>
    </location>
</feature>
<feature type="region of interest" description="Disordered" evidence="3">
    <location>
        <begin position="3332"/>
        <end position="3515"/>
    </location>
</feature>
<feature type="compositionally biased region" description="Basic and acidic residues" evidence="3">
    <location>
        <begin position="120"/>
        <end position="129"/>
    </location>
</feature>
<feature type="compositionally biased region" description="Low complexity" evidence="3">
    <location>
        <begin position="995"/>
        <end position="1031"/>
    </location>
</feature>
<feature type="compositionally biased region" description="Low complexity" evidence="3">
    <location>
        <begin position="1040"/>
        <end position="1139"/>
    </location>
</feature>
<feature type="compositionally biased region" description="Pro residues" evidence="3">
    <location>
        <begin position="1140"/>
        <end position="1151"/>
    </location>
</feature>
<feature type="compositionally biased region" description="Low complexity" evidence="3">
    <location>
        <begin position="1162"/>
        <end position="1178"/>
    </location>
</feature>
<feature type="compositionally biased region" description="Low complexity" evidence="3">
    <location>
        <begin position="1268"/>
        <end position="1298"/>
    </location>
</feature>
<feature type="compositionally biased region" description="Polar residues" evidence="3">
    <location>
        <begin position="1715"/>
        <end position="1730"/>
    </location>
</feature>
<feature type="compositionally biased region" description="Low complexity" evidence="3">
    <location>
        <begin position="3352"/>
        <end position="3386"/>
    </location>
</feature>
<feature type="compositionally biased region" description="Polar residues" evidence="3">
    <location>
        <begin position="3402"/>
        <end position="3426"/>
    </location>
</feature>
<feature type="compositionally biased region" description="Low complexity" evidence="3">
    <location>
        <begin position="3437"/>
        <end position="3451"/>
    </location>
</feature>
<feature type="compositionally biased region" description="Polar residues" evidence="3">
    <location>
        <begin position="3466"/>
        <end position="3488"/>
    </location>
</feature>
<feature type="binding site" evidence="1">
    <location>
        <position position="3181"/>
    </location>
    <ligand>
        <name>Ca(2+)</name>
        <dbReference type="ChEBI" id="CHEBI:29108"/>
        <label>1</label>
    </ligand>
</feature>
<feature type="binding site" evidence="1">
    <location>
        <position position="3183"/>
    </location>
    <ligand>
        <name>Ca(2+)</name>
        <dbReference type="ChEBI" id="CHEBI:29108"/>
        <label>1</label>
    </ligand>
</feature>
<feature type="binding site" evidence="1">
    <location>
        <position position="3185"/>
    </location>
    <ligand>
        <name>Ca(2+)</name>
        <dbReference type="ChEBI" id="CHEBI:29108"/>
        <label>1</label>
    </ligand>
</feature>
<feature type="binding site" evidence="1">
    <location>
        <position position="3187"/>
    </location>
    <ligand>
        <name>Ca(2+)</name>
        <dbReference type="ChEBI" id="CHEBI:29108"/>
        <label>1</label>
    </ligand>
</feature>
<feature type="binding site" evidence="1">
    <location>
        <position position="3192"/>
    </location>
    <ligand>
        <name>Ca(2+)</name>
        <dbReference type="ChEBI" id="CHEBI:29108"/>
        <label>1</label>
    </ligand>
</feature>
<feature type="binding site" evidence="1">
    <location>
        <position position="3217"/>
    </location>
    <ligand>
        <name>Ca(2+)</name>
        <dbReference type="ChEBI" id="CHEBI:29108"/>
        <label>2</label>
    </ligand>
</feature>
<feature type="binding site" evidence="1">
    <location>
        <position position="3219"/>
    </location>
    <ligand>
        <name>Ca(2+)</name>
        <dbReference type="ChEBI" id="CHEBI:29108"/>
        <label>2</label>
    </ligand>
</feature>
<feature type="binding site" evidence="1">
    <location>
        <position position="3221"/>
    </location>
    <ligand>
        <name>Ca(2+)</name>
        <dbReference type="ChEBI" id="CHEBI:29108"/>
        <label>2</label>
    </ligand>
</feature>
<feature type="binding site" evidence="1">
    <location>
        <position position="3223"/>
    </location>
    <ligand>
        <name>Ca(2+)</name>
        <dbReference type="ChEBI" id="CHEBI:29108"/>
        <label>2</label>
    </ligand>
</feature>
<feature type="binding site" evidence="1">
    <location>
        <position position="3228"/>
    </location>
    <ligand>
        <name>Ca(2+)</name>
        <dbReference type="ChEBI" id="CHEBI:29108"/>
        <label>2</label>
    </ligand>
</feature>
<feature type="splice variant" id="VSP_061506" description="In isoform 7.">
    <original>MFQKEQVDPLQMKLQQVNGLGQG</original>
    <variation>VIVHFDSGKGLKSKVRFAGLTWW</variation>
    <location>
        <begin position="1405"/>
        <end position="1427"/>
    </location>
</feature>
<feature type="splice variant" id="VSP_061507" description="In isoform 7.">
    <location>
        <begin position="1428"/>
        <end position="3515"/>
    </location>
</feature>
<feature type="sequence variant" id="VAR_033338" description="In dbSNP:rs1746842.">
    <original>I</original>
    <variation>V</variation>
    <location>
        <position position="960"/>
    </location>
</feature>
<feature type="sequence variant" id="VAR_033339" description="In dbSNP:rs783822.">
    <original>T</original>
    <variation>A</variation>
    <location>
        <position position="1105"/>
    </location>
</feature>
<feature type="sequence variant" id="VAR_033340" description="In dbSNP:rs587523.">
    <original>E</original>
    <variation>K</variation>
    <location>
        <position position="1194"/>
    </location>
</feature>
<feature type="sequence conflict" description="In Ref. 2; BAC87042." evidence="4" ref="2">
    <original>E</original>
    <variation>K</variation>
    <location>
        <position position="231"/>
    </location>
</feature>
<feature type="sequence conflict" description="In Ref. 2; BAC87042." evidence="4" ref="2">
    <original>L</original>
    <variation>P</variation>
    <location>
        <position position="523"/>
    </location>
</feature>
<protein>
    <recommendedName>
        <fullName evidence="4">Microtubule-actin cross-linking factor 1, isoforms 6/7</fullName>
    </recommendedName>
    <alternativeName>
        <fullName>Uncharacterized protein KIAA0754</fullName>
    </alternativeName>
</protein>